<gene>
    <name evidence="13" type="primary">CASD1</name>
    <name type="synonym">C7orf12</name>
    <name type="ORF">Nbla04196</name>
</gene>
<dbReference type="EC" id="2.3.1.45" evidence="11"/>
<dbReference type="EMBL" id="AF397424">
    <property type="protein sequence ID" value="AAK97479.2"/>
    <property type="molecule type" value="mRNA"/>
</dbReference>
<dbReference type="EMBL" id="AK024866">
    <property type="protein sequence ID" value="BAB15028.1"/>
    <property type="status" value="ALT_FRAME"/>
    <property type="molecule type" value="mRNA"/>
</dbReference>
<dbReference type="EMBL" id="AK025532">
    <property type="protein sequence ID" value="BAB15163.1"/>
    <property type="status" value="ALT_SEQ"/>
    <property type="molecule type" value="mRNA"/>
</dbReference>
<dbReference type="EMBL" id="AK123866">
    <property type="protein sequence ID" value="BAG53975.1"/>
    <property type="molecule type" value="mRNA"/>
</dbReference>
<dbReference type="EMBL" id="AC002528">
    <property type="protein sequence ID" value="AAB69978.1"/>
    <property type="status" value="ALT_SEQ"/>
    <property type="molecule type" value="Genomic_DNA"/>
</dbReference>
<dbReference type="EMBL" id="AC096662">
    <property type="status" value="NOT_ANNOTATED_CDS"/>
    <property type="molecule type" value="Genomic_DNA"/>
</dbReference>
<dbReference type="EMBL" id="CH236949">
    <property type="protein sequence ID" value="EAL24136.1"/>
    <property type="molecule type" value="Genomic_DNA"/>
</dbReference>
<dbReference type="EMBL" id="BC063284">
    <property type="protein sequence ID" value="AAH63284.1"/>
    <property type="molecule type" value="mRNA"/>
</dbReference>
<dbReference type="EMBL" id="AB073397">
    <property type="protein sequence ID" value="BAE45726.1"/>
    <property type="molecule type" value="mRNA"/>
</dbReference>
<dbReference type="CCDS" id="CCDS5636.1"/>
<dbReference type="RefSeq" id="NP_075051.4">
    <property type="nucleotide sequence ID" value="NM_022900.4"/>
</dbReference>
<dbReference type="SMR" id="Q96PB1"/>
<dbReference type="BioGRID" id="122344">
    <property type="interactions" value="12"/>
</dbReference>
<dbReference type="FunCoup" id="Q96PB1">
    <property type="interactions" value="758"/>
</dbReference>
<dbReference type="IntAct" id="Q96PB1">
    <property type="interactions" value="2"/>
</dbReference>
<dbReference type="STRING" id="9606.ENSP00000297273"/>
<dbReference type="GlyConnect" id="1077">
    <property type="glycosylation" value="1 N-Linked glycan (1 site)"/>
</dbReference>
<dbReference type="GlyCosmos" id="Q96PB1">
    <property type="glycosylation" value="4 sites, 1 glycan"/>
</dbReference>
<dbReference type="GlyGen" id="Q96PB1">
    <property type="glycosylation" value="5 sites, 8 N-linked glycans (5 sites)"/>
</dbReference>
<dbReference type="iPTMnet" id="Q96PB1"/>
<dbReference type="PhosphoSitePlus" id="Q96PB1"/>
<dbReference type="SwissPalm" id="Q96PB1"/>
<dbReference type="BioMuta" id="CASD1"/>
<dbReference type="DMDM" id="74717082"/>
<dbReference type="jPOST" id="Q96PB1"/>
<dbReference type="MassIVE" id="Q96PB1"/>
<dbReference type="PaxDb" id="9606-ENSP00000297273"/>
<dbReference type="PeptideAtlas" id="Q96PB1"/>
<dbReference type="ProteomicsDB" id="77651"/>
<dbReference type="Antibodypedia" id="45361">
    <property type="antibodies" value="104 antibodies from 14 providers"/>
</dbReference>
<dbReference type="DNASU" id="64921"/>
<dbReference type="Ensembl" id="ENST00000297273.9">
    <property type="protein sequence ID" value="ENSP00000297273.4"/>
    <property type="gene ID" value="ENSG00000127995.17"/>
</dbReference>
<dbReference type="GeneID" id="64921"/>
<dbReference type="KEGG" id="hsa:64921"/>
<dbReference type="MANE-Select" id="ENST00000297273.9">
    <property type="protein sequence ID" value="ENSP00000297273.4"/>
    <property type="RefSeq nucleotide sequence ID" value="NM_022900.5"/>
    <property type="RefSeq protein sequence ID" value="NP_075051.4"/>
</dbReference>
<dbReference type="UCSC" id="uc003uni.5">
    <property type="organism name" value="human"/>
</dbReference>
<dbReference type="AGR" id="HGNC:16014"/>
<dbReference type="CTD" id="64921"/>
<dbReference type="DisGeNET" id="64921"/>
<dbReference type="GeneCards" id="CASD1"/>
<dbReference type="HGNC" id="HGNC:16014">
    <property type="gene designation" value="CASD1"/>
</dbReference>
<dbReference type="HPA" id="ENSG00000127995">
    <property type="expression patterns" value="Low tissue specificity"/>
</dbReference>
<dbReference type="MalaCards" id="CASD1"/>
<dbReference type="MIM" id="611686">
    <property type="type" value="gene"/>
</dbReference>
<dbReference type="neXtProt" id="NX_Q96PB1"/>
<dbReference type="OpenTargets" id="ENSG00000127995"/>
<dbReference type="PharmGKB" id="PA143485408"/>
<dbReference type="VEuPathDB" id="HostDB:ENSG00000127995"/>
<dbReference type="eggNOG" id="KOG1699">
    <property type="taxonomic scope" value="Eukaryota"/>
</dbReference>
<dbReference type="GeneTree" id="ENSGT00390000004037"/>
<dbReference type="HOGENOM" id="CLU_008003_1_0_1"/>
<dbReference type="InParanoid" id="Q96PB1"/>
<dbReference type="OMA" id="WSAREWA"/>
<dbReference type="OrthoDB" id="1932925at2759"/>
<dbReference type="PAN-GO" id="Q96PB1">
    <property type="GO annotations" value="2 GO annotations based on evolutionary models"/>
</dbReference>
<dbReference type="PhylomeDB" id="Q96PB1"/>
<dbReference type="TreeFam" id="TF324898"/>
<dbReference type="BRENDA" id="2.3.1.45">
    <property type="organism ID" value="2681"/>
</dbReference>
<dbReference type="PathwayCommons" id="Q96PB1"/>
<dbReference type="BioGRID-ORCS" id="64921">
    <property type="hits" value="11 hits in 1155 CRISPR screens"/>
</dbReference>
<dbReference type="ChiTaRS" id="CASD1">
    <property type="organism name" value="human"/>
</dbReference>
<dbReference type="GenomeRNAi" id="64921"/>
<dbReference type="Pharos" id="Q96PB1">
    <property type="development level" value="Tbio"/>
</dbReference>
<dbReference type="PRO" id="PR:Q96PB1"/>
<dbReference type="Proteomes" id="UP000005640">
    <property type="component" value="Chromosome 7"/>
</dbReference>
<dbReference type="RNAct" id="Q96PB1">
    <property type="molecule type" value="protein"/>
</dbReference>
<dbReference type="Bgee" id="ENSG00000127995">
    <property type="expression patterns" value="Expressed in adrenal tissue and 194 other cell types or tissues"/>
</dbReference>
<dbReference type="ExpressionAtlas" id="Q96PB1">
    <property type="expression patterns" value="baseline and differential"/>
</dbReference>
<dbReference type="GO" id="GO:0000139">
    <property type="term" value="C:Golgi membrane"/>
    <property type="evidence" value="ECO:0000314"/>
    <property type="project" value="UniProtKB"/>
</dbReference>
<dbReference type="GO" id="GO:0047186">
    <property type="term" value="F:N-acetylneuraminate 9-O-acetyltransferase activity"/>
    <property type="evidence" value="ECO:0000314"/>
    <property type="project" value="UniProtKB"/>
</dbReference>
<dbReference type="GO" id="GO:0005975">
    <property type="term" value="P:carbohydrate metabolic process"/>
    <property type="evidence" value="ECO:0000314"/>
    <property type="project" value="UniProtKB"/>
</dbReference>
<dbReference type="InterPro" id="IPR012419">
    <property type="entry name" value="Cas1_AcylTrans_dom"/>
</dbReference>
<dbReference type="InterPro" id="IPR036915">
    <property type="entry name" value="Cyclin-like_sf"/>
</dbReference>
<dbReference type="InterPro" id="IPR057106">
    <property type="entry name" value="NXPE4_C"/>
</dbReference>
<dbReference type="PANTHER" id="PTHR13533">
    <property type="entry name" value="N-ACETYLNEURAMINATE 9-O-ACETYLTRANSFERASE"/>
    <property type="match status" value="1"/>
</dbReference>
<dbReference type="PANTHER" id="PTHR13533:SF1">
    <property type="entry name" value="N-ACETYLNEURAMINATE 9-O-ACETYLTRANSFERASE"/>
    <property type="match status" value="1"/>
</dbReference>
<dbReference type="Pfam" id="PF07779">
    <property type="entry name" value="Cas1_AcylT"/>
    <property type="match status" value="1"/>
</dbReference>
<dbReference type="Pfam" id="PF24536">
    <property type="entry name" value="NXPE4_C"/>
    <property type="match status" value="1"/>
</dbReference>
<dbReference type="SUPFAM" id="SSF47954">
    <property type="entry name" value="Cyclin-like"/>
    <property type="match status" value="1"/>
</dbReference>
<organism>
    <name type="scientific">Homo sapiens</name>
    <name type="common">Human</name>
    <dbReference type="NCBI Taxonomy" id="9606"/>
    <lineage>
        <taxon>Eukaryota</taxon>
        <taxon>Metazoa</taxon>
        <taxon>Chordata</taxon>
        <taxon>Craniata</taxon>
        <taxon>Vertebrata</taxon>
        <taxon>Euteleostomi</taxon>
        <taxon>Mammalia</taxon>
        <taxon>Eutheria</taxon>
        <taxon>Euarchontoglires</taxon>
        <taxon>Primates</taxon>
        <taxon>Haplorrhini</taxon>
        <taxon>Catarrhini</taxon>
        <taxon>Hominidae</taxon>
        <taxon>Homo</taxon>
    </lineage>
</organism>
<accession>Q96PB1</accession>
<accession>B3KW13</accession>
<accession>O14574</accession>
<accession>Q3LIE2</accession>
<accession>Q6P4R4</accession>
<accession>Q9H6T9</accession>
<accession>Q9H770</accession>
<comment type="function">
    <text evidence="2 4 6 7 11">Key enzyme in the biosynthesis of O-acetylated (O-Ac) sialoglycans such as gangliosides O-AcGD3 and O-AcGD2, which affect various processes such as cell-cell interactions, host-pathogen recognition (PubMed:20947662, PubMed:26169044, PubMed:34208013). Catalyzes the transfer of an acetyl group from a donor, the acetyl-coenzyme-A molecule (acetyl-CoA), to the C7/8/9 OH-position of a sialic acid residue (PubMed:20947662, PubMed:26169044). The primary site of O-acetyl group transfer on sialic acid seems to depend on cell type and can be C7, from which the O-acetyl group could subsequently migrate to the C8 and then to the C9 position, or at C9 with possibility of migrating to the C8 and then to the C7 position (PubMed:20947662, PubMed:26169044). Together with ST8SIA1 (GD3 synthase) it increases the levels of ganglioside Ac-O-7-GD3 (PubMed:20947662). Can transfer the acetyl group from acetyl-CoA to free sialate (N-acetylneuraminate, Neu5Ac) in vitro, but has preferred substrate specificity for CMP-activated sialate (CMP-Neu5Ac), resulting in the formation of 9-O-acetylated CMP-Neu5Ac (CMP-Neu5,9Ac2) (PubMed:26169044). CMP-Neu5,9Ac2 may be used by sialyltransferases as a sialate donor for glycoconjugate acceptors such as ganglioside GD3 (PubMed:26169044). O-acetylation at position C9 of ganglioside GD3 can counteract the pro-apoptotic effects of the ganglioside GD3 in tumor cells (PubMed:12486096).</text>
</comment>
<comment type="catalytic activity">
    <reaction evidence="12">
        <text>CMP-N-acetyl-beta-neuraminate + acetyl-CoA = CMP-N-acetyl-9-O-acetyl-beta-neuraminate + CoA</text>
        <dbReference type="Rhea" id="RHEA:81827"/>
        <dbReference type="ChEBI" id="CHEBI:57287"/>
        <dbReference type="ChEBI" id="CHEBI:57288"/>
        <dbReference type="ChEBI" id="CHEBI:57812"/>
        <dbReference type="ChEBI" id="CHEBI:229947"/>
        <dbReference type="EC" id="2.3.1.45"/>
    </reaction>
    <physiologicalReaction direction="left-to-right" evidence="12">
        <dbReference type="Rhea" id="RHEA:81828"/>
    </physiologicalReaction>
</comment>
<comment type="catalytic activity">
    <reaction evidence="4">
        <text>a ganglioside GD3 (d18:1(4E)) + acetyl-CoA = a ganglioside Ac-O-7-GD3(d18:1(4E)) + CoA</text>
        <dbReference type="Rhea" id="RHEA:79499"/>
        <dbReference type="ChEBI" id="CHEBI:57287"/>
        <dbReference type="ChEBI" id="CHEBI:57288"/>
        <dbReference type="ChEBI" id="CHEBI:78436"/>
        <dbReference type="ChEBI" id="CHEBI:228242"/>
    </reaction>
    <physiologicalReaction direction="left-to-right" evidence="4">
        <dbReference type="Rhea" id="RHEA:79500"/>
    </physiologicalReaction>
</comment>
<comment type="catalytic activity">
    <reaction evidence="12">
        <text>CMP-N-acetyl-beta-neuraminate + acetyl-CoA = CMP-N-acetyl-7-O-acetyl-beta-neuraminate + CoA</text>
        <dbReference type="Rhea" id="RHEA:79555"/>
        <dbReference type="ChEBI" id="CHEBI:57287"/>
        <dbReference type="ChEBI" id="CHEBI:57288"/>
        <dbReference type="ChEBI" id="CHEBI:57812"/>
        <dbReference type="ChEBI" id="CHEBI:229976"/>
    </reaction>
    <physiologicalReaction direction="left-to-right" evidence="12">
        <dbReference type="Rhea" id="RHEA:79556"/>
    </physiologicalReaction>
</comment>
<comment type="subcellular location">
    <subcellularLocation>
        <location evidence="6">Golgi apparatus membrane</location>
        <topology evidence="10">Multi-pass membrane protein</topology>
    </subcellularLocation>
</comment>
<comment type="tissue specificity">
    <text evidence="5">Highly expressed in peripheral B lymphocytes.</text>
</comment>
<comment type="PTM">
    <text evidence="6">N-glycosylated.</text>
</comment>
<comment type="similarity">
    <text evidence="10">Belongs to the PC-esterase family. CASD1 subfamily.</text>
</comment>
<comment type="sequence caution" evidence="10">
    <conflict type="erroneous gene model prediction">
        <sequence resource="EMBL-CDS" id="AAB69978"/>
    </conflict>
</comment>
<comment type="sequence caution" evidence="10">
    <conflict type="frameshift">
        <sequence resource="EMBL-CDS" id="BAB15028"/>
    </conflict>
</comment>
<comment type="sequence caution" evidence="10">
    <conflict type="erroneous initiation">
        <sequence resource="EMBL-CDS" id="BAB15163"/>
    </conflict>
    <text>Truncated N-terminus.</text>
</comment>
<comment type="sequence caution" evidence="10">
    <conflict type="frameshift">
        <sequence resource="EMBL-CDS" id="BAB15163"/>
    </conflict>
</comment>
<keyword id="KW-0012">Acyltransferase</keyword>
<keyword id="KW-0325">Glycoprotein</keyword>
<keyword id="KW-0333">Golgi apparatus</keyword>
<keyword id="KW-0472">Membrane</keyword>
<keyword id="KW-1267">Proteomics identification</keyword>
<keyword id="KW-1185">Reference proteome</keyword>
<keyword id="KW-0808">Transferase</keyword>
<keyword id="KW-0812">Transmembrane</keyword>
<keyword id="KW-1133">Transmembrane helix</keyword>
<protein>
    <recommendedName>
        <fullName evidence="10">N-acetylneuraminate (7)9-O-acetyltransferase</fullName>
        <ecNumber evidence="11">2.3.1.45</ecNumber>
    </recommendedName>
    <alternativeName>
        <fullName evidence="10">CAS1 domain-containing protein 1</fullName>
    </alternativeName>
    <alternativeName>
        <fullName evidence="8">CAS1 protein</fullName>
        <shortName evidence="8">Cas1p</shortName>
    </alternativeName>
    <alternativeName>
        <fullName evidence="8 9">Sialate O-acetyltransferase</fullName>
        <shortName evidence="8 9">SOAT</shortName>
    </alternativeName>
</protein>
<feature type="chain" id="PRO_0000307230" description="N-acetylneuraminate (7)9-O-acetyltransferase">
    <location>
        <begin position="1"/>
        <end position="797"/>
    </location>
</feature>
<feature type="topological domain" description="Cytoplasmic" evidence="10">
    <location>
        <begin position="1"/>
        <end position="18"/>
    </location>
</feature>
<feature type="transmembrane region" description="Helical" evidence="1">
    <location>
        <begin position="19"/>
        <end position="39"/>
    </location>
</feature>
<feature type="topological domain" description="Lumenal" evidence="12">
    <location>
        <begin position="40"/>
        <end position="313"/>
    </location>
</feature>
<feature type="transmembrane region" description="Helical" evidence="1">
    <location>
        <begin position="314"/>
        <end position="334"/>
    </location>
</feature>
<feature type="topological domain" description="Cytoplasmic" evidence="10">
    <location>
        <begin position="335"/>
        <end position="363"/>
    </location>
</feature>
<feature type="transmembrane region" description="Helical" evidence="1">
    <location>
        <begin position="364"/>
        <end position="384"/>
    </location>
</feature>
<feature type="topological domain" description="Lumenal" evidence="10">
    <location>
        <begin position="385"/>
        <end position="395"/>
    </location>
</feature>
<feature type="transmembrane region" description="Helical" evidence="1">
    <location>
        <begin position="396"/>
        <end position="416"/>
    </location>
</feature>
<feature type="topological domain" description="Cytoplasmic" evidence="10">
    <location>
        <begin position="417"/>
        <end position="439"/>
    </location>
</feature>
<feature type="transmembrane region" description="Helical" evidence="1">
    <location>
        <begin position="440"/>
        <end position="460"/>
    </location>
</feature>
<feature type="topological domain" description="Lumenal" evidence="10">
    <location>
        <position position="461"/>
    </location>
</feature>
<feature type="transmembrane region" description="Helical" evidence="1">
    <location>
        <begin position="462"/>
        <end position="482"/>
    </location>
</feature>
<feature type="topological domain" description="Cytoplasmic" evidence="10">
    <location>
        <begin position="483"/>
        <end position="486"/>
    </location>
</feature>
<feature type="transmembrane region" description="Helical" evidence="1">
    <location>
        <begin position="487"/>
        <end position="507"/>
    </location>
</feature>
<feature type="topological domain" description="Lumenal" evidence="10">
    <location>
        <begin position="508"/>
        <end position="513"/>
    </location>
</feature>
<feature type="transmembrane region" description="Helical" evidence="1">
    <location>
        <begin position="514"/>
        <end position="534"/>
    </location>
</feature>
<feature type="topological domain" description="Cytoplasmic" evidence="10">
    <location>
        <begin position="535"/>
        <end position="547"/>
    </location>
</feature>
<feature type="transmembrane region" description="Helical" evidence="1">
    <location>
        <begin position="548"/>
        <end position="568"/>
    </location>
</feature>
<feature type="topological domain" description="Lumenal" evidence="10">
    <location>
        <begin position="569"/>
        <end position="605"/>
    </location>
</feature>
<feature type="transmembrane region" description="Helical" evidence="1">
    <location>
        <begin position="606"/>
        <end position="626"/>
    </location>
</feature>
<feature type="topological domain" description="Cytoplasmic" evidence="10">
    <location>
        <begin position="627"/>
        <end position="638"/>
    </location>
</feature>
<feature type="transmembrane region" description="Helical" evidence="1">
    <location>
        <begin position="639"/>
        <end position="659"/>
    </location>
</feature>
<feature type="topological domain" description="Lumenal" evidence="10">
    <location>
        <begin position="660"/>
        <end position="671"/>
    </location>
</feature>
<feature type="transmembrane region" description="Helical" evidence="1">
    <location>
        <begin position="672"/>
        <end position="692"/>
    </location>
</feature>
<feature type="topological domain" description="Cytoplasmic" evidence="10">
    <location>
        <begin position="693"/>
        <end position="698"/>
    </location>
</feature>
<feature type="transmembrane region" description="Helical" evidence="1">
    <location>
        <begin position="699"/>
        <end position="719"/>
    </location>
</feature>
<feature type="topological domain" description="Lumenal" evidence="10">
    <location>
        <begin position="720"/>
        <end position="725"/>
    </location>
</feature>
<feature type="transmembrane region" description="Helical" evidence="1">
    <location>
        <begin position="726"/>
        <end position="746"/>
    </location>
</feature>
<feature type="topological domain" description="Cytoplasmic" evidence="10">
    <location>
        <begin position="747"/>
        <end position="770"/>
    </location>
</feature>
<feature type="transmembrane region" description="Helical" evidence="1">
    <location>
        <begin position="771"/>
        <end position="791"/>
    </location>
</feature>
<feature type="topological domain" description="Lumenal" evidence="10">
    <location>
        <begin position="792"/>
        <end position="797"/>
    </location>
</feature>
<feature type="active site" description="Acyl-ester intermediate" evidence="6">
    <location>
        <position position="94"/>
    </location>
</feature>
<feature type="active site" evidence="12">
    <location>
        <position position="270"/>
    </location>
</feature>
<feature type="active site" evidence="12">
    <location>
        <position position="273"/>
    </location>
</feature>
<feature type="glycosylation site" description="N-linked (GlcNAc...) asparagine" evidence="1">
    <location>
        <position position="46"/>
    </location>
</feature>
<feature type="glycosylation site" description="N-linked (GlcNAc...) asparagine" evidence="1">
    <location>
        <position position="175"/>
    </location>
</feature>
<feature type="glycosylation site" description="N-linked (GlcNAc...) asparagine" evidence="1">
    <location>
        <position position="187"/>
    </location>
</feature>
<feature type="sequence variant" id="VAR_035383" description="In dbSNP:rs17855797." evidence="3">
    <original>R</original>
    <variation>S</variation>
    <location>
        <position position="386"/>
    </location>
</feature>
<feature type="mutagenesis site" description="Abolishes O-acetyltransferase activity." evidence="6">
    <original>S</original>
    <variation>A</variation>
    <location>
        <position position="94"/>
    </location>
</feature>
<feature type="sequence conflict" description="In Ref. 2; BAB15028." evidence="10" ref="2">
    <original>K</original>
    <variation>E</variation>
    <location>
        <position position="622"/>
    </location>
</feature>
<evidence type="ECO:0000255" key="1"/>
<evidence type="ECO:0000269" key="2">
    <source>
    </source>
</evidence>
<evidence type="ECO:0000269" key="3">
    <source>
    </source>
</evidence>
<evidence type="ECO:0000269" key="4">
    <source>
    </source>
</evidence>
<evidence type="ECO:0000269" key="5">
    <source>
    </source>
</evidence>
<evidence type="ECO:0000269" key="6">
    <source>
    </source>
</evidence>
<evidence type="ECO:0000269" key="7">
    <source>
    </source>
</evidence>
<evidence type="ECO:0000303" key="8">
    <source>
    </source>
</evidence>
<evidence type="ECO:0000303" key="9">
    <source>
    </source>
</evidence>
<evidence type="ECO:0000305" key="10"/>
<evidence type="ECO:0000305" key="11">
    <source>
    </source>
</evidence>
<evidence type="ECO:0000305" key="12">
    <source>
    </source>
</evidence>
<evidence type="ECO:0000312" key="13">
    <source>
        <dbReference type="HGNC" id="HGNC:16014"/>
    </source>
</evidence>
<proteinExistence type="evidence at protein level"/>
<sequence>MAALAYNLGKREINHYFSVRSAKVLALVAVLLLAACHLASRRYRGNDSCEYLLSSGRFLGEKVWQPHSCMMHKYKISEAKNCLVDKHIAFIGDSRIRQLFYSFVKIINPQFKEEGNKHENIPFEDKTASVKVDFLWHPEVNGSMKQCIKVWTEDSIAKPHVIVAGAATWSIKIHNGSSEALSQYKMNITSIAPLLEKLAKTSDVYWVLQDPVYEDLLSENRKMITNEKIDAYNEAAVSILNSSTRNSKSNVKMFSVSKLIAQETIMESLDGLHLPESSRETTAMILMNVYCNKILKPVDGSCCQPRPPVTLIQKLAACFFTLSIIGYLIFYIIHRNAHRKNKPCTDLESGEEKKNIINTPVSSLEILLQSFCKLGLIMAYFYMCDRANLFMKENKFYTHSSFFIPIIYILVLGVFYNENTKETKVLNREQTDEWKGWMQLVILIYHISGASTFLPVYMHIRVLVAAYLFQTGYGHFSYFWIKGDFGIYRVCQVLFRLNFLVVVLCIVMDRPYQFYYFVPLVTVWFMVIYVTLALWPQIIQKKANGNCFWHFGLLLKLGFLLLFICFLAYSQGAFEKIFSLWPLSKCFELKGNVYEWWFRWRLDRYVVFHGMLFAFIYLALQKRQILSEGKGEPLFSNKISNFLLFISVVSFLTYSIWASSCKNKAECNELHPSVSVVQILAFILIRNIPGYARSVYSSFFAWFGKISLELFICQYHIWLAADTRGILVLIPGNPMLNIIVSTFIFVCVAHEISQITNDLAQIIIPKDNSSLLKRLACIAAFFCGLLILSSIQDKSKH</sequence>
<reference key="1">
    <citation type="submission" date="2001-10" db="EMBL/GenBank/DDBJ databases">
        <authorList>
            <person name="Grabowski M."/>
            <person name="Zimprich A."/>
            <person name="Strom T.M."/>
        </authorList>
    </citation>
    <scope>NUCLEOTIDE SEQUENCE [MRNA]</scope>
    <source>
        <tissue>Brain</tissue>
    </source>
</reference>
<reference key="2">
    <citation type="journal article" date="2004" name="Nat. Genet.">
        <title>Complete sequencing and characterization of 21,243 full-length human cDNAs.</title>
        <authorList>
            <person name="Ota T."/>
            <person name="Suzuki Y."/>
            <person name="Nishikawa T."/>
            <person name="Otsuki T."/>
            <person name="Sugiyama T."/>
            <person name="Irie R."/>
            <person name="Wakamatsu A."/>
            <person name="Hayashi K."/>
            <person name="Sato H."/>
            <person name="Nagai K."/>
            <person name="Kimura K."/>
            <person name="Makita H."/>
            <person name="Sekine M."/>
            <person name="Obayashi M."/>
            <person name="Nishi T."/>
            <person name="Shibahara T."/>
            <person name="Tanaka T."/>
            <person name="Ishii S."/>
            <person name="Yamamoto J."/>
            <person name="Saito K."/>
            <person name="Kawai Y."/>
            <person name="Isono Y."/>
            <person name="Nakamura Y."/>
            <person name="Nagahari K."/>
            <person name="Murakami K."/>
            <person name="Yasuda T."/>
            <person name="Iwayanagi T."/>
            <person name="Wagatsuma M."/>
            <person name="Shiratori A."/>
            <person name="Sudo H."/>
            <person name="Hosoiri T."/>
            <person name="Kaku Y."/>
            <person name="Kodaira H."/>
            <person name="Kondo H."/>
            <person name="Sugawara M."/>
            <person name="Takahashi M."/>
            <person name="Kanda K."/>
            <person name="Yokoi T."/>
            <person name="Furuya T."/>
            <person name="Kikkawa E."/>
            <person name="Omura Y."/>
            <person name="Abe K."/>
            <person name="Kamihara K."/>
            <person name="Katsuta N."/>
            <person name="Sato K."/>
            <person name="Tanikawa M."/>
            <person name="Yamazaki M."/>
            <person name="Ninomiya K."/>
            <person name="Ishibashi T."/>
            <person name="Yamashita H."/>
            <person name="Murakawa K."/>
            <person name="Fujimori K."/>
            <person name="Tanai H."/>
            <person name="Kimata M."/>
            <person name="Watanabe M."/>
            <person name="Hiraoka S."/>
            <person name="Chiba Y."/>
            <person name="Ishida S."/>
            <person name="Ono Y."/>
            <person name="Takiguchi S."/>
            <person name="Watanabe S."/>
            <person name="Yosida M."/>
            <person name="Hotuta T."/>
            <person name="Kusano J."/>
            <person name="Kanehori K."/>
            <person name="Takahashi-Fujii A."/>
            <person name="Hara H."/>
            <person name="Tanase T.-O."/>
            <person name="Nomura Y."/>
            <person name="Togiya S."/>
            <person name="Komai F."/>
            <person name="Hara R."/>
            <person name="Takeuchi K."/>
            <person name="Arita M."/>
            <person name="Imose N."/>
            <person name="Musashino K."/>
            <person name="Yuuki H."/>
            <person name="Oshima A."/>
            <person name="Sasaki N."/>
            <person name="Aotsuka S."/>
            <person name="Yoshikawa Y."/>
            <person name="Matsunawa H."/>
            <person name="Ichihara T."/>
            <person name="Shiohata N."/>
            <person name="Sano S."/>
            <person name="Moriya S."/>
            <person name="Momiyama H."/>
            <person name="Satoh N."/>
            <person name="Takami S."/>
            <person name="Terashima Y."/>
            <person name="Suzuki O."/>
            <person name="Nakagawa S."/>
            <person name="Senoh A."/>
            <person name="Mizoguchi H."/>
            <person name="Goto Y."/>
            <person name="Shimizu F."/>
            <person name="Wakebe H."/>
            <person name="Hishigaki H."/>
            <person name="Watanabe T."/>
            <person name="Sugiyama A."/>
            <person name="Takemoto M."/>
            <person name="Kawakami B."/>
            <person name="Yamazaki M."/>
            <person name="Watanabe K."/>
            <person name="Kumagai A."/>
            <person name="Itakura S."/>
            <person name="Fukuzumi Y."/>
            <person name="Fujimori Y."/>
            <person name="Komiyama M."/>
            <person name="Tashiro H."/>
            <person name="Tanigami A."/>
            <person name="Fujiwara T."/>
            <person name="Ono T."/>
            <person name="Yamada K."/>
            <person name="Fujii Y."/>
            <person name="Ozaki K."/>
            <person name="Hirao M."/>
            <person name="Ohmori Y."/>
            <person name="Kawabata A."/>
            <person name="Hikiji T."/>
            <person name="Kobatake N."/>
            <person name="Inagaki H."/>
            <person name="Ikema Y."/>
            <person name="Okamoto S."/>
            <person name="Okitani R."/>
            <person name="Kawakami T."/>
            <person name="Noguchi S."/>
            <person name="Itoh T."/>
            <person name="Shigeta K."/>
            <person name="Senba T."/>
            <person name="Matsumura K."/>
            <person name="Nakajima Y."/>
            <person name="Mizuno T."/>
            <person name="Morinaga M."/>
            <person name="Sasaki M."/>
            <person name="Togashi T."/>
            <person name="Oyama M."/>
            <person name="Hata H."/>
            <person name="Watanabe M."/>
            <person name="Komatsu T."/>
            <person name="Mizushima-Sugano J."/>
            <person name="Satoh T."/>
            <person name="Shirai Y."/>
            <person name="Takahashi Y."/>
            <person name="Nakagawa K."/>
            <person name="Okumura K."/>
            <person name="Nagase T."/>
            <person name="Nomura N."/>
            <person name="Kikuchi H."/>
            <person name="Masuho Y."/>
            <person name="Yamashita R."/>
            <person name="Nakai K."/>
            <person name="Yada T."/>
            <person name="Nakamura Y."/>
            <person name="Ohara O."/>
            <person name="Isogai T."/>
            <person name="Sugano S."/>
        </authorList>
    </citation>
    <scope>NUCLEOTIDE SEQUENCE [LARGE SCALE MRNA]</scope>
    <source>
        <tissue>Brain</tissue>
        <tissue>Colon</tissue>
    </source>
</reference>
<reference key="3">
    <citation type="journal article" date="2003" name="Nature">
        <title>The DNA sequence of human chromosome 7.</title>
        <authorList>
            <person name="Hillier L.W."/>
            <person name="Fulton R.S."/>
            <person name="Fulton L.A."/>
            <person name="Graves T.A."/>
            <person name="Pepin K.H."/>
            <person name="Wagner-McPherson C."/>
            <person name="Layman D."/>
            <person name="Maas J."/>
            <person name="Jaeger S."/>
            <person name="Walker R."/>
            <person name="Wylie K."/>
            <person name="Sekhon M."/>
            <person name="Becker M.C."/>
            <person name="O'Laughlin M.D."/>
            <person name="Schaller M.E."/>
            <person name="Fewell G.A."/>
            <person name="Delehaunty K.D."/>
            <person name="Miner T.L."/>
            <person name="Nash W.E."/>
            <person name="Cordes M."/>
            <person name="Du H."/>
            <person name="Sun H."/>
            <person name="Edwards J."/>
            <person name="Bradshaw-Cordum H."/>
            <person name="Ali J."/>
            <person name="Andrews S."/>
            <person name="Isak A."/>
            <person name="Vanbrunt A."/>
            <person name="Nguyen C."/>
            <person name="Du F."/>
            <person name="Lamar B."/>
            <person name="Courtney L."/>
            <person name="Kalicki J."/>
            <person name="Ozersky P."/>
            <person name="Bielicki L."/>
            <person name="Scott K."/>
            <person name="Holmes A."/>
            <person name="Harkins R."/>
            <person name="Harris A."/>
            <person name="Strong C.M."/>
            <person name="Hou S."/>
            <person name="Tomlinson C."/>
            <person name="Dauphin-Kohlberg S."/>
            <person name="Kozlowicz-Reilly A."/>
            <person name="Leonard S."/>
            <person name="Rohlfing T."/>
            <person name="Rock S.M."/>
            <person name="Tin-Wollam A.-M."/>
            <person name="Abbott A."/>
            <person name="Minx P."/>
            <person name="Maupin R."/>
            <person name="Strowmatt C."/>
            <person name="Latreille P."/>
            <person name="Miller N."/>
            <person name="Johnson D."/>
            <person name="Murray J."/>
            <person name="Woessner J.P."/>
            <person name="Wendl M.C."/>
            <person name="Yang S.-P."/>
            <person name="Schultz B.R."/>
            <person name="Wallis J.W."/>
            <person name="Spieth J."/>
            <person name="Bieri T.A."/>
            <person name="Nelson J.O."/>
            <person name="Berkowicz N."/>
            <person name="Wohldmann P.E."/>
            <person name="Cook L.L."/>
            <person name="Hickenbotham M.T."/>
            <person name="Eldred J."/>
            <person name="Williams D."/>
            <person name="Bedell J.A."/>
            <person name="Mardis E.R."/>
            <person name="Clifton S.W."/>
            <person name="Chissoe S.L."/>
            <person name="Marra M.A."/>
            <person name="Raymond C."/>
            <person name="Haugen E."/>
            <person name="Gillett W."/>
            <person name="Zhou Y."/>
            <person name="James R."/>
            <person name="Phelps K."/>
            <person name="Iadanoto S."/>
            <person name="Bubb K."/>
            <person name="Simms E."/>
            <person name="Levy R."/>
            <person name="Clendenning J."/>
            <person name="Kaul R."/>
            <person name="Kent W.J."/>
            <person name="Furey T.S."/>
            <person name="Baertsch R.A."/>
            <person name="Brent M.R."/>
            <person name="Keibler E."/>
            <person name="Flicek P."/>
            <person name="Bork P."/>
            <person name="Suyama M."/>
            <person name="Bailey J.A."/>
            <person name="Portnoy M.E."/>
            <person name="Torrents D."/>
            <person name="Chinwalla A.T."/>
            <person name="Gish W.R."/>
            <person name="Eddy S.R."/>
            <person name="McPherson J.D."/>
            <person name="Olson M.V."/>
            <person name="Eichler E.E."/>
            <person name="Green E.D."/>
            <person name="Waterston R.H."/>
            <person name="Wilson R.K."/>
        </authorList>
    </citation>
    <scope>NUCLEOTIDE SEQUENCE [LARGE SCALE GENOMIC DNA]</scope>
</reference>
<reference key="4">
    <citation type="journal article" date="2003" name="Science">
        <title>Human chromosome 7: DNA sequence and biology.</title>
        <authorList>
            <person name="Scherer S.W."/>
            <person name="Cheung J."/>
            <person name="MacDonald J.R."/>
            <person name="Osborne L.R."/>
            <person name="Nakabayashi K."/>
            <person name="Herbrick J.-A."/>
            <person name="Carson A.R."/>
            <person name="Parker-Katiraee L."/>
            <person name="Skaug J."/>
            <person name="Khaja R."/>
            <person name="Zhang J."/>
            <person name="Hudek A.K."/>
            <person name="Li M."/>
            <person name="Haddad M."/>
            <person name="Duggan G.E."/>
            <person name="Fernandez B.A."/>
            <person name="Kanematsu E."/>
            <person name="Gentles S."/>
            <person name="Christopoulos C.C."/>
            <person name="Choufani S."/>
            <person name="Kwasnicka D."/>
            <person name="Zheng X.H."/>
            <person name="Lai Z."/>
            <person name="Nusskern D.R."/>
            <person name="Zhang Q."/>
            <person name="Gu Z."/>
            <person name="Lu F."/>
            <person name="Zeesman S."/>
            <person name="Nowaczyk M.J."/>
            <person name="Teshima I."/>
            <person name="Chitayat D."/>
            <person name="Shuman C."/>
            <person name="Weksberg R."/>
            <person name="Zackai E.H."/>
            <person name="Grebe T.A."/>
            <person name="Cox S.R."/>
            <person name="Kirkpatrick S.J."/>
            <person name="Rahman N."/>
            <person name="Friedman J.M."/>
            <person name="Heng H.H.Q."/>
            <person name="Pelicci P.G."/>
            <person name="Lo-Coco F."/>
            <person name="Belloni E."/>
            <person name="Shaffer L.G."/>
            <person name="Pober B."/>
            <person name="Morton C.C."/>
            <person name="Gusella J.F."/>
            <person name="Bruns G.A.P."/>
            <person name="Korf B.R."/>
            <person name="Quade B.J."/>
            <person name="Ligon A.H."/>
            <person name="Ferguson H."/>
            <person name="Higgins A.W."/>
            <person name="Leach N.T."/>
            <person name="Herrick S.R."/>
            <person name="Lemyre E."/>
            <person name="Farra C.G."/>
            <person name="Kim H.-G."/>
            <person name="Summers A.M."/>
            <person name="Gripp K.W."/>
            <person name="Roberts W."/>
            <person name="Szatmari P."/>
            <person name="Winsor E.J.T."/>
            <person name="Grzeschik K.-H."/>
            <person name="Teebi A."/>
            <person name="Minassian B.A."/>
            <person name="Kere J."/>
            <person name="Armengol L."/>
            <person name="Pujana M.A."/>
            <person name="Estivill X."/>
            <person name="Wilson M.D."/>
            <person name="Koop B.F."/>
            <person name="Tosi S."/>
            <person name="Moore G.E."/>
            <person name="Boright A.P."/>
            <person name="Zlotorynski E."/>
            <person name="Kerem B."/>
            <person name="Kroisel P.M."/>
            <person name="Petek E."/>
            <person name="Oscier D.G."/>
            <person name="Mould S.J."/>
            <person name="Doehner H."/>
            <person name="Doehner K."/>
            <person name="Rommens J.M."/>
            <person name="Vincent J.B."/>
            <person name="Venter J.C."/>
            <person name="Li P.W."/>
            <person name="Mural R.J."/>
            <person name="Adams M.D."/>
            <person name="Tsui L.-C."/>
        </authorList>
    </citation>
    <scope>NUCLEOTIDE SEQUENCE [LARGE SCALE GENOMIC DNA]</scope>
</reference>
<reference key="5">
    <citation type="journal article" date="2004" name="Genome Res.">
        <title>The status, quality, and expansion of the NIH full-length cDNA project: the Mammalian Gene Collection (MGC).</title>
        <authorList>
            <consortium name="The MGC Project Team"/>
        </authorList>
    </citation>
    <scope>NUCLEOTIDE SEQUENCE [LARGE SCALE MRNA]</scope>
    <scope>VARIANT SER-386</scope>
    <source>
        <tissue>Brain</tissue>
    </source>
</reference>
<reference key="6">
    <citation type="journal article" date="2003" name="Cancer Lett.">
        <title>Neuroblastoma oligo-capping cDNA project: toward the understanding of the genesis and biology of neuroblastoma.</title>
        <authorList>
            <person name="Ohira M."/>
            <person name="Morohashi A."/>
            <person name="Nakamura Y."/>
            <person name="Isogai E."/>
            <person name="Furuya K."/>
            <person name="Hamano S."/>
            <person name="Machida T."/>
            <person name="Aoyama M."/>
            <person name="Fukumura M."/>
            <person name="Miyazaki K."/>
            <person name="Suzuki Y."/>
            <person name="Sugano S."/>
            <person name="Hirato J."/>
            <person name="Nakagawara A."/>
        </authorList>
    </citation>
    <scope>NUCLEOTIDE SEQUENCE [LARGE SCALE MRNA] OF 335-797</scope>
    <source>
        <tissue>Neuroblastoma</tissue>
    </source>
</reference>
<reference key="7">
    <citation type="journal article" date="2002" name="J. Exp. Med.">
        <title>Acetylation suppresses the proapoptotic activity of GD3 ganglioside.</title>
        <authorList>
            <person name="Malisan F."/>
            <person name="Franchi L."/>
            <person name="Tomassini B."/>
            <person name="Ventura N."/>
            <person name="Condo I."/>
            <person name="Rippo M.R."/>
            <person name="Rufini A."/>
            <person name="Liberati L."/>
            <person name="Nachtigall C."/>
            <person name="Kniep B."/>
            <person name="Testi R."/>
        </authorList>
    </citation>
    <scope>FUNCTION</scope>
</reference>
<reference key="8">
    <citation type="journal article" date="2011" name="Glycobiology">
        <title>The human Cas1 protein: a sialic acid-specific O-acetyltransferase?</title>
        <authorList>
            <person name="Arming S."/>
            <person name="Wipfler D."/>
            <person name="Mayr J."/>
            <person name="Merling A."/>
            <person name="Vilas U."/>
            <person name="Schauer R."/>
            <person name="Schwartz-Albiez R."/>
            <person name="Vlasak R."/>
        </authorList>
    </citation>
    <scope>FUNCTION</scope>
    <scope>CATALYTIC ACTIVITY</scope>
</reference>
<reference key="9">
    <citation type="journal article" date="2011" name="Glycobiology">
        <title>Differentially regulated expression of 9-O-acetyl GD3 (CD60b) and 7-O-acetyl-GD3 (CD60c) during differentiation and maturation of human T and B lymphocytes.</title>
        <authorList>
            <person name="Wipfler D."/>
            <person name="Srinivasan G.V."/>
            <person name="Sadick H."/>
            <person name="Kniep B."/>
            <person name="Arming S."/>
            <person name="Willhauck-Fleckenstein M."/>
            <person name="Vlasak R."/>
            <person name="Schauer R."/>
            <person name="Schwartz-Albiez R."/>
        </authorList>
    </citation>
    <scope>TISSUE SPECIFICITY</scope>
</reference>
<reference key="10">
    <citation type="journal article" date="2015" name="Nat. Commun.">
        <title>9-O-Acetylation of sialic acids is catalysed by CASD1 via a covalent acetyl-enzyme intermediate.</title>
        <authorList>
            <person name="Baumann A.M."/>
            <person name="Bakkers M.J."/>
            <person name="Buettner F.F."/>
            <person name="Hartmann M."/>
            <person name="Grove M."/>
            <person name="Langereis M.A."/>
            <person name="de Groot R.J."/>
            <person name="Muehlenhoff M."/>
        </authorList>
    </citation>
    <scope>FUNCTION</scope>
    <scope>CATALYTIC ACTIVITY</scope>
    <scope>SUBCELLULAR LOCATION</scope>
    <scope>GLYCOSYLATION</scope>
    <scope>TOPOLOGY</scope>
    <scope>MUTAGENESIS OF SER-94</scope>
</reference>
<reference key="11">
    <citation type="journal article" date="2021" name="Cells">
        <title>Role of Sialyl-O-Acetyltransferase CASD1 on GD2 Ganglioside O-Acetylation in Breast Cancer Cells.</title>
        <authorList>
            <person name="Cavdarli S."/>
            <person name="Schroeter L."/>
            <person name="Albers M."/>
            <person name="Baumann A.M."/>
            <person name="Vicogne D."/>
            <person name="Le Doussal J.M."/>
            <person name="Muehlenhoff M."/>
            <person name="Delannoy P."/>
            <person name="Groux-Degroote S."/>
        </authorList>
    </citation>
    <scope>FUNCTION</scope>
</reference>
<name>CASD1_HUMAN</name>